<proteinExistence type="inferred from homology"/>
<accession>Q65PI6</accession>
<accession>Q62ZX5</accession>
<protein>
    <recommendedName>
        <fullName>UPF0213 protein BLi00048/BL00536</fullName>
    </recommendedName>
</protein>
<sequence>METNSHYFYVLSCRDGSLYAGYTNNIEKRLKTHNDGKGAKYTRARLPVKLHYAECFSTKREAMQAEYYFKKLSRKNKERYIEEKRREGVDYQPAKEF</sequence>
<gene>
    <name type="ordered locus">BLi00048</name>
    <name type="ordered locus">BL00536</name>
</gene>
<reference key="1">
    <citation type="journal article" date="2004" name="J. Mol. Microbiol. Biotechnol.">
        <title>The complete genome sequence of Bacillus licheniformis DSM13, an organism with great industrial potential.</title>
        <authorList>
            <person name="Veith B."/>
            <person name="Herzberg C."/>
            <person name="Steckel S."/>
            <person name="Feesche J."/>
            <person name="Maurer K.H."/>
            <person name="Ehrenreich P."/>
            <person name="Baeumer S."/>
            <person name="Henne A."/>
            <person name="Liesegang H."/>
            <person name="Merkl R."/>
            <person name="Ehrenreich A."/>
            <person name="Gottschalk G."/>
        </authorList>
    </citation>
    <scope>NUCLEOTIDE SEQUENCE [LARGE SCALE GENOMIC DNA]</scope>
    <source>
        <strain>ATCC 14580 / DSM 13 / JCM 2505 / CCUG 7422 / NBRC 12200 / NCIMB 9375 / NCTC 10341 / NRRL NRS-1264 / Gibson 46</strain>
    </source>
</reference>
<reference key="2">
    <citation type="journal article" date="2004" name="Genome Biol.">
        <title>Complete genome sequence of the industrial bacterium Bacillus licheniformis and comparisons with closely related Bacillus species.</title>
        <authorList>
            <person name="Rey M.W."/>
            <person name="Ramaiya P."/>
            <person name="Nelson B.A."/>
            <person name="Brody-Karpin S.D."/>
            <person name="Zaretsky E.J."/>
            <person name="Tang M."/>
            <person name="Lopez de Leon A."/>
            <person name="Xiang H."/>
            <person name="Gusti V."/>
            <person name="Clausen I.G."/>
            <person name="Olsen P.B."/>
            <person name="Rasmussen M.D."/>
            <person name="Andersen J.T."/>
            <person name="Joergensen P.L."/>
            <person name="Larsen T.S."/>
            <person name="Sorokin A."/>
            <person name="Bolotin A."/>
            <person name="Lapidus A."/>
            <person name="Galleron N."/>
            <person name="Ehrlich S.D."/>
            <person name="Berka R.M."/>
        </authorList>
    </citation>
    <scope>NUCLEOTIDE SEQUENCE [LARGE SCALE GENOMIC DNA]</scope>
    <source>
        <strain>ATCC 14580 / DSM 13 / JCM 2505 / CCUG 7422 / NBRC 12200 / NCIMB 9375 / NCTC 10341 / NRRL NRS-1264 / Gibson 46</strain>
    </source>
</reference>
<name>Y536_BACLD</name>
<feature type="chain" id="PRO_1000063659" description="UPF0213 protein BLi00048/BL00536">
    <location>
        <begin position="1"/>
        <end position="97"/>
    </location>
</feature>
<feature type="domain" description="GIY-YIG" evidence="1">
    <location>
        <begin position="4"/>
        <end position="79"/>
    </location>
</feature>
<keyword id="KW-1185">Reference proteome</keyword>
<comment type="similarity">
    <text evidence="2">Belongs to the UPF0213 family.</text>
</comment>
<dbReference type="EMBL" id="CP000002">
    <property type="protein sequence ID" value="AAU21683.1"/>
    <property type="molecule type" value="Genomic_DNA"/>
</dbReference>
<dbReference type="EMBL" id="AE017333">
    <property type="protein sequence ID" value="AAU39028.1"/>
    <property type="molecule type" value="Genomic_DNA"/>
</dbReference>
<dbReference type="RefSeq" id="WP_003178169.1">
    <property type="nucleotide sequence ID" value="NC_006322.1"/>
</dbReference>
<dbReference type="SMR" id="Q65PI6"/>
<dbReference type="STRING" id="279010.BL00536"/>
<dbReference type="KEGG" id="bld:BLi00048"/>
<dbReference type="KEGG" id="bli:BL00536"/>
<dbReference type="eggNOG" id="COG2827">
    <property type="taxonomic scope" value="Bacteria"/>
</dbReference>
<dbReference type="HOGENOM" id="CLU_135650_0_3_9"/>
<dbReference type="Proteomes" id="UP000000606">
    <property type="component" value="Chromosome"/>
</dbReference>
<dbReference type="CDD" id="cd10456">
    <property type="entry name" value="GIY-YIG_UPF0213"/>
    <property type="match status" value="1"/>
</dbReference>
<dbReference type="Gene3D" id="3.40.1440.10">
    <property type="entry name" value="GIY-YIG endonuclease"/>
    <property type="match status" value="1"/>
</dbReference>
<dbReference type="InterPro" id="IPR000305">
    <property type="entry name" value="GIY-YIG_endonuc"/>
</dbReference>
<dbReference type="InterPro" id="IPR035901">
    <property type="entry name" value="GIY-YIG_endonuc_sf"/>
</dbReference>
<dbReference type="InterPro" id="IPR050190">
    <property type="entry name" value="UPF0213_domain"/>
</dbReference>
<dbReference type="PANTHER" id="PTHR34477">
    <property type="entry name" value="UPF0213 PROTEIN YHBQ"/>
    <property type="match status" value="1"/>
</dbReference>
<dbReference type="PANTHER" id="PTHR34477:SF1">
    <property type="entry name" value="UPF0213 PROTEIN YHBQ"/>
    <property type="match status" value="1"/>
</dbReference>
<dbReference type="Pfam" id="PF01541">
    <property type="entry name" value="GIY-YIG"/>
    <property type="match status" value="1"/>
</dbReference>
<dbReference type="SMART" id="SM00465">
    <property type="entry name" value="GIYc"/>
    <property type="match status" value="1"/>
</dbReference>
<dbReference type="SUPFAM" id="SSF82771">
    <property type="entry name" value="GIY-YIG endonuclease"/>
    <property type="match status" value="1"/>
</dbReference>
<dbReference type="PROSITE" id="PS50164">
    <property type="entry name" value="GIY_YIG"/>
    <property type="match status" value="1"/>
</dbReference>
<evidence type="ECO:0000255" key="1">
    <source>
        <dbReference type="PROSITE-ProRule" id="PRU00977"/>
    </source>
</evidence>
<evidence type="ECO:0000305" key="2"/>
<organism>
    <name type="scientific">Bacillus licheniformis (strain ATCC 14580 / DSM 13 / JCM 2505 / CCUG 7422 / NBRC 12200 / NCIMB 9375 / NCTC 10341 / NRRL NRS-1264 / Gibson 46)</name>
    <dbReference type="NCBI Taxonomy" id="279010"/>
    <lineage>
        <taxon>Bacteria</taxon>
        <taxon>Bacillati</taxon>
        <taxon>Bacillota</taxon>
        <taxon>Bacilli</taxon>
        <taxon>Bacillales</taxon>
        <taxon>Bacillaceae</taxon>
        <taxon>Bacillus</taxon>
    </lineage>
</organism>